<evidence type="ECO:0000250" key="1">
    <source>
        <dbReference type="UniProtKB" id="Q9RFR0"/>
    </source>
</evidence>
<evidence type="ECO:0000269" key="2">
    <source>
    </source>
</evidence>
<evidence type="ECO:0000303" key="3">
    <source>
    </source>
</evidence>
<evidence type="ECO:0000305" key="4"/>
<evidence type="ECO:0000312" key="5">
    <source>
        <dbReference type="EMBL" id="EFJ20192.1"/>
    </source>
</evidence>
<accession>D8S5L4</accession>
<gene>
    <name evidence="3" type="primary">MGS</name>
    <name evidence="5" type="synonym">GT78A1</name>
    <name evidence="5" type="ORF">SELMODRAFT_452917</name>
</gene>
<organism>
    <name type="scientific">Selaginella moellendorffii</name>
    <name type="common">Spikemoss</name>
    <dbReference type="NCBI Taxonomy" id="88036"/>
    <lineage>
        <taxon>Eukaryota</taxon>
        <taxon>Viridiplantae</taxon>
        <taxon>Streptophyta</taxon>
        <taxon>Embryophyta</taxon>
        <taxon>Tracheophyta</taxon>
        <taxon>Lycopodiopsida</taxon>
        <taxon>Selaginellales</taxon>
        <taxon>Selaginellaceae</taxon>
        <taxon>Selaginella</taxon>
    </lineage>
</organism>
<protein>
    <recommendedName>
        <fullName evidence="3">Mannosylglycerate synthase</fullName>
        <ecNumber evidence="2">2.4.1.269</ecNumber>
    </recommendedName>
</protein>
<feature type="chain" id="PRO_0000451955" description="Mannosylglycerate synthase">
    <location>
        <begin position="1"/>
        <end position="422"/>
    </location>
</feature>
<feature type="binding site" evidence="1">
    <location>
        <begin position="7"/>
        <end position="11"/>
    </location>
    <ligand>
        <name>GDP-alpha-D-mannose</name>
        <dbReference type="ChEBI" id="CHEBI:57527"/>
    </ligand>
</feature>
<feature type="binding site" evidence="1">
    <location>
        <position position="66"/>
    </location>
    <ligand>
        <name>GDP-alpha-D-mannose</name>
        <dbReference type="ChEBI" id="CHEBI:57527"/>
    </ligand>
</feature>
<feature type="binding site" evidence="1">
    <location>
        <position position="77"/>
    </location>
    <ligand>
        <name>GDP-alpha-D-mannose</name>
        <dbReference type="ChEBI" id="CHEBI:57527"/>
    </ligand>
</feature>
<feature type="binding site" evidence="1">
    <location>
        <begin position="101"/>
        <end position="102"/>
    </location>
    <ligand>
        <name>GDP-alpha-D-mannose</name>
        <dbReference type="ChEBI" id="CHEBI:57527"/>
    </ligand>
</feature>
<feature type="binding site" evidence="1">
    <location>
        <position position="101"/>
    </location>
    <ligand>
        <name>GDP-alpha-D-mannose</name>
        <dbReference type="ChEBI" id="CHEBI:57527"/>
    </ligand>
</feature>
<feature type="binding site" evidence="1">
    <location>
        <position position="132"/>
    </location>
    <ligand>
        <name>(R)-glycerate</name>
        <dbReference type="ChEBI" id="CHEBI:16659"/>
    </ligand>
</feature>
<feature type="binding site" evidence="1">
    <location>
        <begin position="137"/>
        <end position="140"/>
    </location>
    <ligand>
        <name>(R)-glycerate</name>
        <dbReference type="ChEBI" id="CHEBI:16659"/>
    </ligand>
</feature>
<feature type="binding site" evidence="1">
    <location>
        <position position="164"/>
    </location>
    <ligand>
        <name>GDP-alpha-D-mannose</name>
        <dbReference type="ChEBI" id="CHEBI:57527"/>
    </ligand>
</feature>
<feature type="binding site" evidence="1">
    <location>
        <position position="193"/>
    </location>
    <ligand>
        <name>GDP-alpha-D-mannose</name>
        <dbReference type="ChEBI" id="CHEBI:57527"/>
    </ligand>
</feature>
<feature type="binding site" evidence="1">
    <location>
        <position position="221"/>
    </location>
    <ligand>
        <name>GDP-alpha-D-mannose</name>
        <dbReference type="ChEBI" id="CHEBI:57527"/>
    </ligand>
</feature>
<sequence>MSLVCFPFKEEDVAVVVRNVECAAAHPRVSTVLCVGYSKGETWCAIEAKRPSIESSTGKRIILLQQKRIGVSLRSGKGDGMNTALAYFLDHTELKRIHFYDSDIVSFSADWITKAERQADLDFDVVRHYFPRSSTDAMITWFVTKIGFCLLWPKTVLPFIEQPLGGELLLTRKAAEALYTDHRVRGQSDWGIDTLYTFIMVQKGLHLAEVYIPEGKVHALYSGLRDLRTMLVECFSAMQSLKDEAVPLNEGTHRMEYTRPVPELVKQKVGYDVEKTLKLLRSNWTQGQRDLLQKHFDPALAKGLLNASEWPTWGFADEEAWVAAYRTLLVHFEKGDEDWEELLFKIWVSRVLNHTMRHSLRGYDAALDALRSLIWETQHQSAMLSKSAAANHHIVSGHSASEALPRTAGQLREKRMDAACAV</sequence>
<name>MGS_SELML</name>
<dbReference type="EC" id="2.4.1.269" evidence="2"/>
<dbReference type="EMBL" id="GL377603">
    <property type="protein sequence ID" value="EFJ20192.1"/>
    <property type="molecule type" value="Genomic_DNA"/>
</dbReference>
<dbReference type="SMR" id="D8S5L4"/>
<dbReference type="EnsemblPlants" id="EFJ20192">
    <property type="protein sequence ID" value="EFJ20192"/>
    <property type="gene ID" value="SELMODRAFT_452917"/>
</dbReference>
<dbReference type="GeneID" id="9658694"/>
<dbReference type="Gramene" id="EFJ20192">
    <property type="protein sequence ID" value="EFJ20192"/>
    <property type="gene ID" value="SELMODRAFT_452917"/>
</dbReference>
<dbReference type="KEGG" id="smo:SELMODRAFT_452917"/>
<dbReference type="eggNOG" id="ENOG502SJKF">
    <property type="taxonomic scope" value="Eukaryota"/>
</dbReference>
<dbReference type="HOGENOM" id="CLU_694216_0_0_1"/>
<dbReference type="InParanoid" id="D8S5L4"/>
<dbReference type="OMA" id="RIHFYDA"/>
<dbReference type="OrthoDB" id="2012100at2759"/>
<dbReference type="Proteomes" id="UP000001514">
    <property type="component" value="Unassembled WGS sequence"/>
</dbReference>
<dbReference type="GO" id="GO:0102921">
    <property type="term" value="F:mannosylglycerate synthase activity"/>
    <property type="evidence" value="ECO:0000314"/>
    <property type="project" value="UniProtKB"/>
</dbReference>
<dbReference type="GO" id="GO:0051479">
    <property type="term" value="P:mannosylglycerate biosynthetic process"/>
    <property type="evidence" value="ECO:0000314"/>
    <property type="project" value="UniProtKB"/>
</dbReference>
<dbReference type="Gene3D" id="3.90.550.10">
    <property type="entry name" value="Spore Coat Polysaccharide Biosynthesis Protein SpsA, Chain A"/>
    <property type="match status" value="2"/>
</dbReference>
<dbReference type="InterPro" id="IPR054143">
    <property type="entry name" value="MGS_C"/>
</dbReference>
<dbReference type="InterPro" id="IPR054145">
    <property type="entry name" value="MGS_GT"/>
</dbReference>
<dbReference type="InterPro" id="IPR029044">
    <property type="entry name" value="Nucleotide-diphossugar_trans"/>
</dbReference>
<dbReference type="Pfam" id="PF21967">
    <property type="entry name" value="MGS_C"/>
    <property type="match status" value="1"/>
</dbReference>
<dbReference type="Pfam" id="PF21969">
    <property type="entry name" value="MGS_GT"/>
    <property type="match status" value="1"/>
</dbReference>
<dbReference type="SUPFAM" id="SSF53448">
    <property type="entry name" value="Nucleotide-diphospho-sugar transferases"/>
    <property type="match status" value="1"/>
</dbReference>
<keyword id="KW-0328">Glycosyltransferase</keyword>
<keyword id="KW-1185">Reference proteome</keyword>
<keyword id="KW-0808">Transferase</keyword>
<reference key="1">
    <citation type="journal article" date="2011" name="Science">
        <title>The Selaginella genome identifies genetic changes associated with the evolution of vascular plants.</title>
        <authorList>
            <person name="Banks J.A."/>
            <person name="Nishiyama T."/>
            <person name="Hasebe M."/>
            <person name="Bowman J.L."/>
            <person name="Gribskov M."/>
            <person name="dePamphilis C."/>
            <person name="Albert V.A."/>
            <person name="Aono N."/>
            <person name="Aoyama T."/>
            <person name="Ambrose B.A."/>
            <person name="Ashton N.W."/>
            <person name="Axtell M.J."/>
            <person name="Barker E."/>
            <person name="Barker M.S."/>
            <person name="Bennetzen J.L."/>
            <person name="Bonawitz N.D."/>
            <person name="Chapple C."/>
            <person name="Cheng C."/>
            <person name="Correa L.G."/>
            <person name="Dacre M."/>
            <person name="DeBarry J."/>
            <person name="Dreyer I."/>
            <person name="Elias M."/>
            <person name="Engstrom E.M."/>
            <person name="Estelle M."/>
            <person name="Feng L."/>
            <person name="Finet C."/>
            <person name="Floyd S.K."/>
            <person name="Frommer W.B."/>
            <person name="Fujita T."/>
            <person name="Gramzow L."/>
            <person name="Gutensohn M."/>
            <person name="Harholt J."/>
            <person name="Hattori M."/>
            <person name="Heyl A."/>
            <person name="Hirai T."/>
            <person name="Hiwatashi Y."/>
            <person name="Ishikawa M."/>
            <person name="Iwata M."/>
            <person name="Karol K.G."/>
            <person name="Koehler B."/>
            <person name="Kolukisaoglu U."/>
            <person name="Kubo M."/>
            <person name="Kurata T."/>
            <person name="Lalonde S."/>
            <person name="Li K."/>
            <person name="Li Y."/>
            <person name="Litt A."/>
            <person name="Lyons E."/>
            <person name="Manning G."/>
            <person name="Maruyama T."/>
            <person name="Michael T.P."/>
            <person name="Mikami K."/>
            <person name="Miyazaki S."/>
            <person name="Morinaga S."/>
            <person name="Murata T."/>
            <person name="Mueller-Roeber B."/>
            <person name="Nelson D.R."/>
            <person name="Obara M."/>
            <person name="Oguri Y."/>
            <person name="Olmstead R.G."/>
            <person name="Onodera N."/>
            <person name="Petersen B.L."/>
            <person name="Pils B."/>
            <person name="Prigge M."/>
            <person name="Rensing S.A."/>
            <person name="Riano-Pachon D.M."/>
            <person name="Roberts A.W."/>
            <person name="Sato Y."/>
            <person name="Scheller H.V."/>
            <person name="Schulz B."/>
            <person name="Schulz C."/>
            <person name="Shakirov E.V."/>
            <person name="Shibagaki N."/>
            <person name="Shinohara N."/>
            <person name="Shippen D.E."/>
            <person name="Soerensen I."/>
            <person name="Sotooka R."/>
            <person name="Sugimoto N."/>
            <person name="Sugita M."/>
            <person name="Sumikawa N."/>
            <person name="Tanurdzic M."/>
            <person name="Theissen G."/>
            <person name="Ulvskov P."/>
            <person name="Wakazuki S."/>
            <person name="Weng J.K."/>
            <person name="Willats W.W."/>
            <person name="Wipf D."/>
            <person name="Wolf P.G."/>
            <person name="Yang L."/>
            <person name="Zimmer A.D."/>
            <person name="Zhu Q."/>
            <person name="Mitros T."/>
            <person name="Hellsten U."/>
            <person name="Loque D."/>
            <person name="Otillar R."/>
            <person name="Salamov A."/>
            <person name="Schmutz J."/>
            <person name="Shapiro H."/>
            <person name="Lindquist E."/>
            <person name="Lucas S."/>
            <person name="Rokhsar D."/>
            <person name="Grigoriev I.V."/>
        </authorList>
    </citation>
    <scope>NUCLEOTIDE SEQUENCE [LARGE SCALE GENOMIC DNA]</scope>
</reference>
<reference key="2">
    <citation type="journal article" date="2013" name="Planta">
        <title>The plant Selaginella moellendorffii possesses enzymes for synthesis and hydrolysis of the compatible solutes mannosylglycerate and glucosylglycerate.</title>
        <authorList>
            <person name="Nobre A."/>
            <person name="Empadinhas N."/>
            <person name="Nobre M.F."/>
            <person name="Lourenco E.C."/>
            <person name="Maycock C."/>
            <person name="Ventura M.R."/>
            <person name="Mingote A."/>
            <person name="da Costa M.S."/>
        </authorList>
    </citation>
    <scope>FUNCTION</scope>
    <scope>CATALYTIC ACTIVITY</scope>
    <scope>ACTIVITY REGULATION</scope>
    <scope>BIOPHYSICOCHEMICAL PROPERTIES</scope>
</reference>
<comment type="function">
    <text evidence="2">Involved in the biosynthesis of the compatible solute alpha-D-mannosyl-glycerate (MG) (PubMed:23179444). Catalyzes the condensation of GDP-alpha-D-mannose (GDP-Man) with D-glycerate to produce alpha-D-mannosyl-glycerate (PubMed:23179444). Can also use GDP-alpha-D-glucose (GDP-Glc) as sugar donor to produce alpha-D-glucopyranosyl-glycerate (GG) (PubMed:23179444).</text>
</comment>
<comment type="catalytic activity">
    <reaction evidence="2">
        <text>(R)-glycerate + GDP-alpha-D-mannose = (2R)-2-O-(alpha-D-mannosyl)-glycerate + GDP + H(+)</text>
        <dbReference type="Rhea" id="RHEA:30639"/>
        <dbReference type="ChEBI" id="CHEBI:15378"/>
        <dbReference type="ChEBI" id="CHEBI:16659"/>
        <dbReference type="ChEBI" id="CHEBI:57527"/>
        <dbReference type="ChEBI" id="CHEBI:57541"/>
        <dbReference type="ChEBI" id="CHEBI:58189"/>
        <dbReference type="EC" id="2.4.1.269"/>
    </reaction>
    <physiologicalReaction direction="left-to-right" evidence="2">
        <dbReference type="Rhea" id="RHEA:30640"/>
    </physiologicalReaction>
</comment>
<comment type="catalytic activity">
    <reaction evidence="2">
        <text>GDP-alpha-D-glucose + (R)-glycerate = (2R)-2-O-(alpha-D-glucopyranosyl)-glycerate + GDP + H(+)</text>
        <dbReference type="Rhea" id="RHEA:65940"/>
        <dbReference type="ChEBI" id="CHEBI:15378"/>
        <dbReference type="ChEBI" id="CHEBI:16659"/>
        <dbReference type="ChEBI" id="CHEBI:58189"/>
        <dbReference type="ChEBI" id="CHEBI:62230"/>
        <dbReference type="ChEBI" id="CHEBI:62510"/>
    </reaction>
    <physiologicalReaction direction="left-to-right" evidence="2">
        <dbReference type="Rhea" id="RHEA:65941"/>
    </physiologicalReaction>
</comment>
<comment type="activity regulation">
    <text evidence="2">Activity is not dependent on divalent cations, but it is enhanced by Mg(2+).</text>
</comment>
<comment type="biophysicochemical properties">
    <kinetics>
        <KM evidence="2">2.4 mM for GDP-alpha-D-mannose (at 50 degrees Celsius)</KM>
        <KM evidence="2">4.4 mM for D-glycerate (with GDP-alpha-D-mannose as cosubstrate and at 50 degrees Celsius)</KM>
        <KM evidence="2">1 mM for GDP-alpha-D-glucose (at 50 degrees Celsius)</KM>
        <KM evidence="2">3.4 mM for D-glycerate (with GDP-alpha-D-glucose as cosubstrate and at 50 degrees Celsius)</KM>
        <Vmax evidence="2">9.5 umol/min/mg enzyme with GDP-alpha-D-mannose as substrate (at 50 degrees Celsius)</Vmax>
        <Vmax evidence="2">10.9 umol/min/mg enzyme with D-glycerate as substrate (with GDP-alpha-D-mannose as cosubstrate and at 50 degrees Celsius)</Vmax>
        <Vmax evidence="2">8.0 umol/min/mg enzyme with GDP-alpha-D-glucose as substrate (at 50 degrees Celsius)</Vmax>
        <Vmax evidence="2">11.0 umol/min/mg enzyme with D-glycerate as substrate (with GDP-alpha-D-glucose as cosubstrate and at 50 degrees Celsius)</Vmax>
    </kinetics>
    <phDependence>
        <text evidence="2">Optimum pH is 8.0.</text>
    </phDependence>
    <temperatureDependence>
        <text evidence="2">Optimum temperature is 50 degrees Celsius.</text>
    </temperatureDependence>
</comment>
<comment type="similarity">
    <text evidence="4">Belongs to the glycosyltransferase 78 family.</text>
</comment>
<proteinExistence type="evidence at protein level"/>